<keyword id="KW-0328">Glycosyltransferase</keyword>
<keyword id="KW-0479">Metal-binding</keyword>
<keyword id="KW-0671">Queuosine biosynthesis</keyword>
<keyword id="KW-0808">Transferase</keyword>
<keyword id="KW-0819">tRNA processing</keyword>
<keyword id="KW-0862">Zinc</keyword>
<dbReference type="EC" id="2.4.2.29" evidence="1"/>
<dbReference type="EMBL" id="AL596169">
    <property type="protein sequence ID" value="CAC96796.1"/>
    <property type="molecule type" value="Genomic_DNA"/>
</dbReference>
<dbReference type="PIR" id="AD1628">
    <property type="entry name" value="AD1628"/>
</dbReference>
<dbReference type="RefSeq" id="WP_010991595.1">
    <property type="nucleotide sequence ID" value="NC_003212.1"/>
</dbReference>
<dbReference type="SMR" id="Q92BI4"/>
<dbReference type="STRING" id="272626.gene:17565896"/>
<dbReference type="KEGG" id="lin:lin1565"/>
<dbReference type="eggNOG" id="COG0343">
    <property type="taxonomic scope" value="Bacteria"/>
</dbReference>
<dbReference type="HOGENOM" id="CLU_022060_0_1_9"/>
<dbReference type="OrthoDB" id="9805417at2"/>
<dbReference type="UniPathway" id="UPA00392"/>
<dbReference type="Proteomes" id="UP000002513">
    <property type="component" value="Chromosome"/>
</dbReference>
<dbReference type="GO" id="GO:0005829">
    <property type="term" value="C:cytosol"/>
    <property type="evidence" value="ECO:0007669"/>
    <property type="project" value="TreeGrafter"/>
</dbReference>
<dbReference type="GO" id="GO:0046872">
    <property type="term" value="F:metal ion binding"/>
    <property type="evidence" value="ECO:0007669"/>
    <property type="project" value="UniProtKB-KW"/>
</dbReference>
<dbReference type="GO" id="GO:0008479">
    <property type="term" value="F:tRNA-guanosine(34) queuine transglycosylase activity"/>
    <property type="evidence" value="ECO:0007669"/>
    <property type="project" value="UniProtKB-UniRule"/>
</dbReference>
<dbReference type="GO" id="GO:0008616">
    <property type="term" value="P:queuosine biosynthetic process"/>
    <property type="evidence" value="ECO:0007669"/>
    <property type="project" value="UniProtKB-UniRule"/>
</dbReference>
<dbReference type="GO" id="GO:0002099">
    <property type="term" value="P:tRNA wobble guanine modification"/>
    <property type="evidence" value="ECO:0007669"/>
    <property type="project" value="TreeGrafter"/>
</dbReference>
<dbReference type="GO" id="GO:0101030">
    <property type="term" value="P:tRNA-guanine transglycosylation"/>
    <property type="evidence" value="ECO:0007669"/>
    <property type="project" value="InterPro"/>
</dbReference>
<dbReference type="FunFam" id="3.20.20.105:FF:000001">
    <property type="entry name" value="Queuine tRNA-ribosyltransferase"/>
    <property type="match status" value="1"/>
</dbReference>
<dbReference type="Gene3D" id="3.20.20.105">
    <property type="entry name" value="Queuine tRNA-ribosyltransferase-like"/>
    <property type="match status" value="1"/>
</dbReference>
<dbReference type="HAMAP" id="MF_00168">
    <property type="entry name" value="Q_tRNA_Tgt"/>
    <property type="match status" value="1"/>
</dbReference>
<dbReference type="InterPro" id="IPR050076">
    <property type="entry name" value="ArchSynthase1/Queuine_TRR"/>
</dbReference>
<dbReference type="InterPro" id="IPR004803">
    <property type="entry name" value="TGT"/>
</dbReference>
<dbReference type="InterPro" id="IPR036511">
    <property type="entry name" value="TGT-like_sf"/>
</dbReference>
<dbReference type="InterPro" id="IPR002616">
    <property type="entry name" value="tRNA_ribo_trans-like"/>
</dbReference>
<dbReference type="NCBIfam" id="TIGR00430">
    <property type="entry name" value="Q_tRNA_tgt"/>
    <property type="match status" value="1"/>
</dbReference>
<dbReference type="NCBIfam" id="TIGR00449">
    <property type="entry name" value="tgt_general"/>
    <property type="match status" value="1"/>
</dbReference>
<dbReference type="PANTHER" id="PTHR46499">
    <property type="entry name" value="QUEUINE TRNA-RIBOSYLTRANSFERASE"/>
    <property type="match status" value="1"/>
</dbReference>
<dbReference type="PANTHER" id="PTHR46499:SF1">
    <property type="entry name" value="QUEUINE TRNA-RIBOSYLTRANSFERASE"/>
    <property type="match status" value="1"/>
</dbReference>
<dbReference type="Pfam" id="PF01702">
    <property type="entry name" value="TGT"/>
    <property type="match status" value="1"/>
</dbReference>
<dbReference type="SUPFAM" id="SSF51713">
    <property type="entry name" value="tRNA-guanine transglycosylase"/>
    <property type="match status" value="1"/>
</dbReference>
<reference key="1">
    <citation type="journal article" date="2001" name="Science">
        <title>Comparative genomics of Listeria species.</title>
        <authorList>
            <person name="Glaser P."/>
            <person name="Frangeul L."/>
            <person name="Buchrieser C."/>
            <person name="Rusniok C."/>
            <person name="Amend A."/>
            <person name="Baquero F."/>
            <person name="Berche P."/>
            <person name="Bloecker H."/>
            <person name="Brandt P."/>
            <person name="Chakraborty T."/>
            <person name="Charbit A."/>
            <person name="Chetouani F."/>
            <person name="Couve E."/>
            <person name="de Daruvar A."/>
            <person name="Dehoux P."/>
            <person name="Domann E."/>
            <person name="Dominguez-Bernal G."/>
            <person name="Duchaud E."/>
            <person name="Durant L."/>
            <person name="Dussurget O."/>
            <person name="Entian K.-D."/>
            <person name="Fsihi H."/>
            <person name="Garcia-del Portillo F."/>
            <person name="Garrido P."/>
            <person name="Gautier L."/>
            <person name="Goebel W."/>
            <person name="Gomez-Lopez N."/>
            <person name="Hain T."/>
            <person name="Hauf J."/>
            <person name="Jackson D."/>
            <person name="Jones L.-M."/>
            <person name="Kaerst U."/>
            <person name="Kreft J."/>
            <person name="Kuhn M."/>
            <person name="Kunst F."/>
            <person name="Kurapkat G."/>
            <person name="Madueno E."/>
            <person name="Maitournam A."/>
            <person name="Mata Vicente J."/>
            <person name="Ng E."/>
            <person name="Nedjari H."/>
            <person name="Nordsiek G."/>
            <person name="Novella S."/>
            <person name="de Pablos B."/>
            <person name="Perez-Diaz J.-C."/>
            <person name="Purcell R."/>
            <person name="Remmel B."/>
            <person name="Rose M."/>
            <person name="Schlueter T."/>
            <person name="Simoes N."/>
            <person name="Tierrez A."/>
            <person name="Vazquez-Boland J.-A."/>
            <person name="Voss H."/>
            <person name="Wehland J."/>
            <person name="Cossart P."/>
        </authorList>
    </citation>
    <scope>NUCLEOTIDE SEQUENCE [LARGE SCALE GENOMIC DNA]</scope>
    <source>
        <strain>ATCC BAA-680 / CLIP 11262</strain>
    </source>
</reference>
<accession>Q92BI4</accession>
<comment type="function">
    <text evidence="1">Catalyzes the base-exchange of a guanine (G) residue with the queuine precursor 7-aminomethyl-7-deazaguanine (PreQ1) at position 34 (anticodon wobble position) in tRNAs with GU(N) anticodons (tRNA-Asp, -Asn, -His and -Tyr). Catalysis occurs through a double-displacement mechanism. The nucleophile active site attacks the C1' of nucleotide 34 to detach the guanine base from the RNA, forming a covalent enzyme-RNA intermediate. The proton acceptor active site deprotonates the incoming PreQ1, allowing a nucleophilic attack on the C1' of the ribose to form the product. After dissociation, two additional enzymatic reactions on the tRNA convert PreQ1 to queuine (Q), resulting in the hypermodified nucleoside queuosine (7-(((4,5-cis-dihydroxy-2-cyclopenten-1-yl)amino)methyl)-7-deazaguanosine).</text>
</comment>
<comment type="catalytic activity">
    <reaction evidence="1">
        <text>7-aminomethyl-7-carbaguanine + guanosine(34) in tRNA = 7-aminomethyl-7-carbaguanosine(34) in tRNA + guanine</text>
        <dbReference type="Rhea" id="RHEA:24104"/>
        <dbReference type="Rhea" id="RHEA-COMP:10341"/>
        <dbReference type="Rhea" id="RHEA-COMP:10342"/>
        <dbReference type="ChEBI" id="CHEBI:16235"/>
        <dbReference type="ChEBI" id="CHEBI:58703"/>
        <dbReference type="ChEBI" id="CHEBI:74269"/>
        <dbReference type="ChEBI" id="CHEBI:82833"/>
        <dbReference type="EC" id="2.4.2.29"/>
    </reaction>
</comment>
<comment type="cofactor">
    <cofactor evidence="1">
        <name>Zn(2+)</name>
        <dbReference type="ChEBI" id="CHEBI:29105"/>
    </cofactor>
    <text evidence="1">Binds 1 zinc ion per subunit.</text>
</comment>
<comment type="pathway">
    <text evidence="1">tRNA modification; tRNA-queuosine biosynthesis.</text>
</comment>
<comment type="subunit">
    <text evidence="1">Homodimer. Within each dimer, one monomer is responsible for RNA recognition and catalysis, while the other monomer binds to the replacement base PreQ1.</text>
</comment>
<comment type="similarity">
    <text evidence="1">Belongs to the queuine tRNA-ribosyltransferase family.</text>
</comment>
<organism>
    <name type="scientific">Listeria innocua serovar 6a (strain ATCC BAA-680 / CLIP 11262)</name>
    <dbReference type="NCBI Taxonomy" id="272626"/>
    <lineage>
        <taxon>Bacteria</taxon>
        <taxon>Bacillati</taxon>
        <taxon>Bacillota</taxon>
        <taxon>Bacilli</taxon>
        <taxon>Bacillales</taxon>
        <taxon>Listeriaceae</taxon>
        <taxon>Listeria</taxon>
    </lineage>
</organism>
<proteinExistence type="inferred from homology"/>
<name>TGT_LISIN</name>
<sequence>MSAIRYELIKTDKQTGARLGKIHTPHGTFDTPMFMPVGTLATVKTMSPEELKAMGAGIILSNTYHLWLRPGEELIREAGGLHKFMNWDQPILTDSGGFQVFSLSKMRDIKEEGVHFRNHLNGDKLFLSPEKAIQIQNALGSDIMMSFDECPPYPASHEYMKKSVERTSRWAERGLKAHERPEDQGLFGIVQGGAYEDLRAQSAKDLVSLDFPGYSIGGLSVGEPKDVMNRVLEHTTPLLPANKPRYLMGVGSPDSLIDGVIRGVDMFDCVLPTRIARNGTCMTSSGRLVIKNAKFTHDFRPIDENCDCYTCKNYSRAYIRHLIRCEETFGIRLTTYHNLHFLLNLMKQVRSAIMEDRLADFREEFFEQYGFNRPDAKNF</sequence>
<feature type="chain" id="PRO_0000135490" description="Queuine tRNA-ribosyltransferase">
    <location>
        <begin position="1"/>
        <end position="379"/>
    </location>
</feature>
<feature type="region of interest" description="RNA binding" evidence="1">
    <location>
        <begin position="249"/>
        <end position="255"/>
    </location>
</feature>
<feature type="region of interest" description="RNA binding; important for wobble base 34 recognition" evidence="1">
    <location>
        <begin position="273"/>
        <end position="277"/>
    </location>
</feature>
<feature type="active site" description="Proton acceptor" evidence="1">
    <location>
        <position position="94"/>
    </location>
</feature>
<feature type="active site" description="Nucleophile" evidence="1">
    <location>
        <position position="268"/>
    </location>
</feature>
<feature type="binding site" evidence="1">
    <location>
        <begin position="94"/>
        <end position="98"/>
    </location>
    <ligand>
        <name>substrate</name>
    </ligand>
</feature>
<feature type="binding site" evidence="1">
    <location>
        <position position="148"/>
    </location>
    <ligand>
        <name>substrate</name>
    </ligand>
</feature>
<feature type="binding site" evidence="1">
    <location>
        <position position="191"/>
    </location>
    <ligand>
        <name>substrate</name>
    </ligand>
</feature>
<feature type="binding site" evidence="1">
    <location>
        <position position="218"/>
    </location>
    <ligand>
        <name>substrate</name>
    </ligand>
</feature>
<feature type="binding site" evidence="1">
    <location>
        <position position="306"/>
    </location>
    <ligand>
        <name>Zn(2+)</name>
        <dbReference type="ChEBI" id="CHEBI:29105"/>
    </ligand>
</feature>
<feature type="binding site" evidence="1">
    <location>
        <position position="308"/>
    </location>
    <ligand>
        <name>Zn(2+)</name>
        <dbReference type="ChEBI" id="CHEBI:29105"/>
    </ligand>
</feature>
<feature type="binding site" evidence="1">
    <location>
        <position position="311"/>
    </location>
    <ligand>
        <name>Zn(2+)</name>
        <dbReference type="ChEBI" id="CHEBI:29105"/>
    </ligand>
</feature>
<feature type="binding site" evidence="1">
    <location>
        <position position="337"/>
    </location>
    <ligand>
        <name>Zn(2+)</name>
        <dbReference type="ChEBI" id="CHEBI:29105"/>
    </ligand>
</feature>
<protein>
    <recommendedName>
        <fullName evidence="1">Queuine tRNA-ribosyltransferase</fullName>
        <ecNumber evidence="1">2.4.2.29</ecNumber>
    </recommendedName>
    <alternativeName>
        <fullName evidence="1">Guanine insertion enzyme</fullName>
    </alternativeName>
    <alternativeName>
        <fullName evidence="1">tRNA-guanine transglycosylase</fullName>
    </alternativeName>
</protein>
<gene>
    <name evidence="1" type="primary">tgt</name>
    <name type="ordered locus">lin1565</name>
</gene>
<evidence type="ECO:0000255" key="1">
    <source>
        <dbReference type="HAMAP-Rule" id="MF_00168"/>
    </source>
</evidence>